<accession>B5ZAX5</accession>
<evidence type="ECO:0000255" key="1">
    <source>
        <dbReference type="HAMAP-Rule" id="MF_00245"/>
    </source>
</evidence>
<dbReference type="EMBL" id="CP001184">
    <property type="protein sequence ID" value="ACI60064.1"/>
    <property type="molecule type" value="Genomic_DNA"/>
</dbReference>
<dbReference type="RefSeq" id="WP_004025510.1">
    <property type="nucleotide sequence ID" value="NC_011374.1"/>
</dbReference>
<dbReference type="SMR" id="B5ZAX5"/>
<dbReference type="STRING" id="565575.UUR10_0158"/>
<dbReference type="KEGG" id="uue:UUR10_0158"/>
<dbReference type="eggNOG" id="COG2739">
    <property type="taxonomic scope" value="Bacteria"/>
</dbReference>
<dbReference type="HOGENOM" id="CLU_129218_1_2_14"/>
<dbReference type="OrthoDB" id="404035at2"/>
<dbReference type="Proteomes" id="UP000002018">
    <property type="component" value="Chromosome"/>
</dbReference>
<dbReference type="Gene3D" id="1.10.10.10">
    <property type="entry name" value="Winged helix-like DNA-binding domain superfamily/Winged helix DNA-binding domain"/>
    <property type="match status" value="1"/>
</dbReference>
<dbReference type="HAMAP" id="MF_00245">
    <property type="entry name" value="UPF0122"/>
    <property type="match status" value="1"/>
</dbReference>
<dbReference type="InterPro" id="IPR013324">
    <property type="entry name" value="RNA_pol_sigma_r3/r4-like"/>
</dbReference>
<dbReference type="InterPro" id="IPR007394">
    <property type="entry name" value="UPF0122"/>
</dbReference>
<dbReference type="InterPro" id="IPR036388">
    <property type="entry name" value="WH-like_DNA-bd_sf"/>
</dbReference>
<dbReference type="NCBIfam" id="NF001073">
    <property type="entry name" value="PRK00118.2-3"/>
    <property type="match status" value="1"/>
</dbReference>
<dbReference type="PANTHER" id="PTHR40083">
    <property type="entry name" value="UPF0122 PROTEIN CBO2450/CLC_2298"/>
    <property type="match status" value="1"/>
</dbReference>
<dbReference type="PANTHER" id="PTHR40083:SF1">
    <property type="entry name" value="UPF0122 PROTEIN YLXM"/>
    <property type="match status" value="1"/>
</dbReference>
<dbReference type="Pfam" id="PF04297">
    <property type="entry name" value="UPF0122"/>
    <property type="match status" value="1"/>
</dbReference>
<dbReference type="SUPFAM" id="SSF88659">
    <property type="entry name" value="Sigma3 and sigma4 domains of RNA polymerase sigma factors"/>
    <property type="match status" value="1"/>
</dbReference>
<comment type="function">
    <text evidence="1">Might take part in the signal recognition particle (SRP) pathway. This is inferred from the conservation of its genetic proximity to ftsY/ffh. May be a regulatory protein.</text>
</comment>
<comment type="similarity">
    <text evidence="1">Belongs to the UPF0122 family.</text>
</comment>
<feature type="chain" id="PRO_1000100823" description="UPF0122 protein UUR10_0158">
    <location>
        <begin position="1"/>
        <end position="99"/>
    </location>
</feature>
<reference key="1">
    <citation type="submission" date="2008-10" db="EMBL/GenBank/DDBJ databases">
        <title>Genome sequence of Ureaplasma urealyticum serovar 10 ATCC-33699.</title>
        <authorList>
            <person name="Shrivastava S."/>
            <person name="Methe B.A."/>
            <person name="Glass J."/>
            <person name="White K."/>
            <person name="Duffy L.B."/>
        </authorList>
    </citation>
    <scope>NUCLEOTIDE SEQUENCE [LARGE SCALE GENOMIC DNA]</scope>
    <source>
        <strain>ATCC 33699 / Western</strain>
    </source>
</reference>
<proteinExistence type="inferred from homology"/>
<sequence length="99" mass="11837">MLNKNKRWYLIALYDIYQGLLTTKQCEYFNLHYFKDLSFSEIAELKEVSKSAISDCLNKVCDQLLKYEQALLIYEKNKKRNDLYTLINDSELVKKLKDI</sequence>
<gene>
    <name type="ordered locus">UUR10_0158</name>
</gene>
<organism>
    <name type="scientific">Ureaplasma urealyticum serovar 10 (strain ATCC 33699 / Western)</name>
    <dbReference type="NCBI Taxonomy" id="565575"/>
    <lineage>
        <taxon>Bacteria</taxon>
        <taxon>Bacillati</taxon>
        <taxon>Mycoplasmatota</taxon>
        <taxon>Mycoplasmoidales</taxon>
        <taxon>Mycoplasmoidaceae</taxon>
        <taxon>Ureaplasma</taxon>
    </lineage>
</organism>
<protein>
    <recommendedName>
        <fullName evidence="1">UPF0122 protein UUR10_0158</fullName>
    </recommendedName>
</protein>
<name>Y158_UREU1</name>